<accession>Q9CX48</accession>
<protein>
    <recommendedName>
        <fullName>Zinc finger CCHC domain-containing protein 10</fullName>
    </recommendedName>
</protein>
<name>ZCH10_MOUSE</name>
<organism>
    <name type="scientific">Mus musculus</name>
    <name type="common">Mouse</name>
    <dbReference type="NCBI Taxonomy" id="10090"/>
    <lineage>
        <taxon>Eukaryota</taxon>
        <taxon>Metazoa</taxon>
        <taxon>Chordata</taxon>
        <taxon>Craniata</taxon>
        <taxon>Vertebrata</taxon>
        <taxon>Euteleostomi</taxon>
        <taxon>Mammalia</taxon>
        <taxon>Eutheria</taxon>
        <taxon>Euarchontoglires</taxon>
        <taxon>Glires</taxon>
        <taxon>Rodentia</taxon>
        <taxon>Myomorpha</taxon>
        <taxon>Muroidea</taxon>
        <taxon>Muridae</taxon>
        <taxon>Murinae</taxon>
        <taxon>Mus</taxon>
        <taxon>Mus</taxon>
    </lineage>
</organism>
<gene>
    <name type="primary">Zcchc10</name>
</gene>
<proteinExistence type="evidence at transcript level"/>
<feature type="chain" id="PRO_0000150968" description="Zinc finger CCHC domain-containing protein 10">
    <location>
        <begin position="1"/>
        <end position="178"/>
    </location>
</feature>
<feature type="zinc finger region" description="CCHC-type">
    <location>
        <begin position="21"/>
        <end position="38"/>
    </location>
</feature>
<feature type="region of interest" description="Disordered" evidence="1">
    <location>
        <begin position="66"/>
        <end position="178"/>
    </location>
</feature>
<feature type="compositionally biased region" description="Low complexity" evidence="1">
    <location>
        <begin position="85"/>
        <end position="113"/>
    </location>
</feature>
<feature type="compositionally biased region" description="Low complexity" evidence="1">
    <location>
        <begin position="121"/>
        <end position="164"/>
    </location>
</feature>
<sequence length="178" mass="19148">MATPMHRLIARRKAEANKQHVRCQKCLEFGHWTYECKGKRKYLHRPSRTAELKKALKEKENRLLLQSIGETNIEKKIKKKKRSKSVTSSSTSSSDSSASESSSESETSASSSSEDSDSDESLSSSSSSSSSSACSSSSSSSSSSSSSDSDSSSSSSSSSSSSESSSDDEPQKKKKKKK</sequence>
<evidence type="ECO:0000256" key="1">
    <source>
        <dbReference type="SAM" id="MobiDB-lite"/>
    </source>
</evidence>
<dbReference type="EMBL" id="AK020177">
    <property type="protein sequence ID" value="BAB32021.1"/>
    <property type="molecule type" value="mRNA"/>
</dbReference>
<dbReference type="EMBL" id="AK027985">
    <property type="protein sequence ID" value="BAC25690.1"/>
    <property type="molecule type" value="mRNA"/>
</dbReference>
<dbReference type="EMBL" id="BC025078">
    <property type="protein sequence ID" value="AAH25078.1"/>
    <property type="molecule type" value="mRNA"/>
</dbReference>
<dbReference type="EMBL" id="BC087902">
    <property type="protein sequence ID" value="AAH87902.1"/>
    <property type="molecule type" value="mRNA"/>
</dbReference>
<dbReference type="CCDS" id="CCDS24675.1"/>
<dbReference type="RefSeq" id="NP_080755.2">
    <property type="nucleotide sequence ID" value="NM_026479.4"/>
</dbReference>
<dbReference type="BioGRID" id="212568">
    <property type="interactions" value="1"/>
</dbReference>
<dbReference type="IntAct" id="Q9CX48">
    <property type="interactions" value="1"/>
</dbReference>
<dbReference type="STRING" id="10090.ENSMUSP00000018383"/>
<dbReference type="PhosphoSitePlus" id="Q9CX48"/>
<dbReference type="PaxDb" id="10090-ENSMUSP00000018383"/>
<dbReference type="PeptideAtlas" id="Q9CX48"/>
<dbReference type="ProteomicsDB" id="275238"/>
<dbReference type="Pumba" id="Q9CX48"/>
<dbReference type="Antibodypedia" id="26217">
    <property type="antibodies" value="26 antibodies from 12 providers"/>
</dbReference>
<dbReference type="DNASU" id="67966"/>
<dbReference type="Ensembl" id="ENSMUST00000018383.10">
    <property type="protein sequence ID" value="ENSMUSP00000018383.4"/>
    <property type="gene ID" value="ENSMUSG00000018239.10"/>
</dbReference>
<dbReference type="GeneID" id="67966"/>
<dbReference type="KEGG" id="mmu:67966"/>
<dbReference type="UCSC" id="uc007ivt.1">
    <property type="organism name" value="mouse"/>
</dbReference>
<dbReference type="AGR" id="MGI:1196228"/>
<dbReference type="CTD" id="54819"/>
<dbReference type="MGI" id="MGI:1196228">
    <property type="gene designation" value="Zcchc10"/>
</dbReference>
<dbReference type="VEuPathDB" id="HostDB:ENSMUSG00000018239"/>
<dbReference type="eggNOG" id="KOG3116">
    <property type="taxonomic scope" value="Eukaryota"/>
</dbReference>
<dbReference type="GeneTree" id="ENSGT00730000111200"/>
<dbReference type="HOGENOM" id="CLU_111178_1_0_1"/>
<dbReference type="InParanoid" id="Q9CX48"/>
<dbReference type="OMA" id="SRTMQFK"/>
<dbReference type="OrthoDB" id="437973at2759"/>
<dbReference type="BioGRID-ORCS" id="67966">
    <property type="hits" value="6 hits in 76 CRISPR screens"/>
</dbReference>
<dbReference type="ChiTaRS" id="Zcchc10">
    <property type="organism name" value="mouse"/>
</dbReference>
<dbReference type="PRO" id="PR:Q9CX48"/>
<dbReference type="Proteomes" id="UP000000589">
    <property type="component" value="Chromosome 11"/>
</dbReference>
<dbReference type="RNAct" id="Q9CX48">
    <property type="molecule type" value="protein"/>
</dbReference>
<dbReference type="Bgee" id="ENSMUSG00000018239">
    <property type="expression patterns" value="Expressed in secondary oocyte and 244 other cell types or tissues"/>
</dbReference>
<dbReference type="ExpressionAtlas" id="Q9CX48">
    <property type="expression patterns" value="baseline and differential"/>
</dbReference>
<dbReference type="GO" id="GO:0003676">
    <property type="term" value="F:nucleic acid binding"/>
    <property type="evidence" value="ECO:0007669"/>
    <property type="project" value="InterPro"/>
</dbReference>
<dbReference type="GO" id="GO:0008270">
    <property type="term" value="F:zinc ion binding"/>
    <property type="evidence" value="ECO:0007669"/>
    <property type="project" value="UniProtKB-KW"/>
</dbReference>
<dbReference type="InterPro" id="IPR039715">
    <property type="entry name" value="ZCCHC10"/>
</dbReference>
<dbReference type="InterPro" id="IPR036875">
    <property type="entry name" value="Znf_CCHC_sf"/>
</dbReference>
<dbReference type="PANTHER" id="PTHR13491">
    <property type="entry name" value="ZCCHC10 PROTEIN"/>
    <property type="match status" value="1"/>
</dbReference>
<dbReference type="PANTHER" id="PTHR13491:SF0">
    <property type="entry name" value="ZINC FINGER CCHC DOMAIN-CONTAINING PROTEIN 10"/>
    <property type="match status" value="1"/>
</dbReference>
<dbReference type="Pfam" id="PF13917">
    <property type="entry name" value="zf-CCHC_3"/>
    <property type="match status" value="1"/>
</dbReference>
<dbReference type="SUPFAM" id="SSF57756">
    <property type="entry name" value="Retrovirus zinc finger-like domains"/>
    <property type="match status" value="1"/>
</dbReference>
<keyword id="KW-0479">Metal-binding</keyword>
<keyword id="KW-1185">Reference proteome</keyword>
<keyword id="KW-0862">Zinc</keyword>
<keyword id="KW-0863">Zinc-finger</keyword>
<reference key="1">
    <citation type="journal article" date="2005" name="Science">
        <title>The transcriptional landscape of the mammalian genome.</title>
        <authorList>
            <person name="Carninci P."/>
            <person name="Kasukawa T."/>
            <person name="Katayama S."/>
            <person name="Gough J."/>
            <person name="Frith M.C."/>
            <person name="Maeda N."/>
            <person name="Oyama R."/>
            <person name="Ravasi T."/>
            <person name="Lenhard B."/>
            <person name="Wells C."/>
            <person name="Kodzius R."/>
            <person name="Shimokawa K."/>
            <person name="Bajic V.B."/>
            <person name="Brenner S.E."/>
            <person name="Batalov S."/>
            <person name="Forrest A.R."/>
            <person name="Zavolan M."/>
            <person name="Davis M.J."/>
            <person name="Wilming L.G."/>
            <person name="Aidinis V."/>
            <person name="Allen J.E."/>
            <person name="Ambesi-Impiombato A."/>
            <person name="Apweiler R."/>
            <person name="Aturaliya R.N."/>
            <person name="Bailey T.L."/>
            <person name="Bansal M."/>
            <person name="Baxter L."/>
            <person name="Beisel K.W."/>
            <person name="Bersano T."/>
            <person name="Bono H."/>
            <person name="Chalk A.M."/>
            <person name="Chiu K.P."/>
            <person name="Choudhary V."/>
            <person name="Christoffels A."/>
            <person name="Clutterbuck D.R."/>
            <person name="Crowe M.L."/>
            <person name="Dalla E."/>
            <person name="Dalrymple B.P."/>
            <person name="de Bono B."/>
            <person name="Della Gatta G."/>
            <person name="di Bernardo D."/>
            <person name="Down T."/>
            <person name="Engstrom P."/>
            <person name="Fagiolini M."/>
            <person name="Faulkner G."/>
            <person name="Fletcher C.F."/>
            <person name="Fukushima T."/>
            <person name="Furuno M."/>
            <person name="Futaki S."/>
            <person name="Gariboldi M."/>
            <person name="Georgii-Hemming P."/>
            <person name="Gingeras T.R."/>
            <person name="Gojobori T."/>
            <person name="Green R.E."/>
            <person name="Gustincich S."/>
            <person name="Harbers M."/>
            <person name="Hayashi Y."/>
            <person name="Hensch T.K."/>
            <person name="Hirokawa N."/>
            <person name="Hill D."/>
            <person name="Huminiecki L."/>
            <person name="Iacono M."/>
            <person name="Ikeo K."/>
            <person name="Iwama A."/>
            <person name="Ishikawa T."/>
            <person name="Jakt M."/>
            <person name="Kanapin A."/>
            <person name="Katoh M."/>
            <person name="Kawasawa Y."/>
            <person name="Kelso J."/>
            <person name="Kitamura H."/>
            <person name="Kitano H."/>
            <person name="Kollias G."/>
            <person name="Krishnan S.P."/>
            <person name="Kruger A."/>
            <person name="Kummerfeld S.K."/>
            <person name="Kurochkin I.V."/>
            <person name="Lareau L.F."/>
            <person name="Lazarevic D."/>
            <person name="Lipovich L."/>
            <person name="Liu J."/>
            <person name="Liuni S."/>
            <person name="McWilliam S."/>
            <person name="Madan Babu M."/>
            <person name="Madera M."/>
            <person name="Marchionni L."/>
            <person name="Matsuda H."/>
            <person name="Matsuzawa S."/>
            <person name="Miki H."/>
            <person name="Mignone F."/>
            <person name="Miyake S."/>
            <person name="Morris K."/>
            <person name="Mottagui-Tabar S."/>
            <person name="Mulder N."/>
            <person name="Nakano N."/>
            <person name="Nakauchi H."/>
            <person name="Ng P."/>
            <person name="Nilsson R."/>
            <person name="Nishiguchi S."/>
            <person name="Nishikawa S."/>
            <person name="Nori F."/>
            <person name="Ohara O."/>
            <person name="Okazaki Y."/>
            <person name="Orlando V."/>
            <person name="Pang K.C."/>
            <person name="Pavan W.J."/>
            <person name="Pavesi G."/>
            <person name="Pesole G."/>
            <person name="Petrovsky N."/>
            <person name="Piazza S."/>
            <person name="Reed J."/>
            <person name="Reid J.F."/>
            <person name="Ring B.Z."/>
            <person name="Ringwald M."/>
            <person name="Rost B."/>
            <person name="Ruan Y."/>
            <person name="Salzberg S.L."/>
            <person name="Sandelin A."/>
            <person name="Schneider C."/>
            <person name="Schoenbach C."/>
            <person name="Sekiguchi K."/>
            <person name="Semple C.A."/>
            <person name="Seno S."/>
            <person name="Sessa L."/>
            <person name="Sheng Y."/>
            <person name="Shibata Y."/>
            <person name="Shimada H."/>
            <person name="Shimada K."/>
            <person name="Silva D."/>
            <person name="Sinclair B."/>
            <person name="Sperling S."/>
            <person name="Stupka E."/>
            <person name="Sugiura K."/>
            <person name="Sultana R."/>
            <person name="Takenaka Y."/>
            <person name="Taki K."/>
            <person name="Tammoja K."/>
            <person name="Tan S.L."/>
            <person name="Tang S."/>
            <person name="Taylor M.S."/>
            <person name="Tegner J."/>
            <person name="Teichmann S.A."/>
            <person name="Ueda H.R."/>
            <person name="van Nimwegen E."/>
            <person name="Verardo R."/>
            <person name="Wei C.L."/>
            <person name="Yagi K."/>
            <person name="Yamanishi H."/>
            <person name="Zabarovsky E."/>
            <person name="Zhu S."/>
            <person name="Zimmer A."/>
            <person name="Hide W."/>
            <person name="Bult C."/>
            <person name="Grimmond S.M."/>
            <person name="Teasdale R.D."/>
            <person name="Liu E.T."/>
            <person name="Brusic V."/>
            <person name="Quackenbush J."/>
            <person name="Wahlestedt C."/>
            <person name="Mattick J.S."/>
            <person name="Hume D.A."/>
            <person name="Kai C."/>
            <person name="Sasaki D."/>
            <person name="Tomaru Y."/>
            <person name="Fukuda S."/>
            <person name="Kanamori-Katayama M."/>
            <person name="Suzuki M."/>
            <person name="Aoki J."/>
            <person name="Arakawa T."/>
            <person name="Iida J."/>
            <person name="Imamura K."/>
            <person name="Itoh M."/>
            <person name="Kato T."/>
            <person name="Kawaji H."/>
            <person name="Kawagashira N."/>
            <person name="Kawashima T."/>
            <person name="Kojima M."/>
            <person name="Kondo S."/>
            <person name="Konno H."/>
            <person name="Nakano K."/>
            <person name="Ninomiya N."/>
            <person name="Nishio T."/>
            <person name="Okada M."/>
            <person name="Plessy C."/>
            <person name="Shibata K."/>
            <person name="Shiraki T."/>
            <person name="Suzuki S."/>
            <person name="Tagami M."/>
            <person name="Waki K."/>
            <person name="Watahiki A."/>
            <person name="Okamura-Oho Y."/>
            <person name="Suzuki H."/>
            <person name="Kawai J."/>
            <person name="Hayashizaki Y."/>
        </authorList>
    </citation>
    <scope>NUCLEOTIDE SEQUENCE [LARGE SCALE MRNA]</scope>
    <source>
        <strain>C57BL/6J</strain>
    </source>
</reference>
<reference key="2">
    <citation type="journal article" date="2004" name="Genome Res.">
        <title>The status, quality, and expansion of the NIH full-length cDNA project: the Mammalian Gene Collection (MGC).</title>
        <authorList>
            <consortium name="The MGC Project Team"/>
        </authorList>
    </citation>
    <scope>NUCLEOTIDE SEQUENCE [LARGE SCALE MRNA]</scope>
    <source>
        <tissue>Eye</tissue>
        <tissue>Molar</tissue>
    </source>
</reference>